<dbReference type="EC" id="3.6.1.-" evidence="1"/>
<dbReference type="EMBL" id="CP000103">
    <property type="protein sequence ID" value="ABB74018.1"/>
    <property type="molecule type" value="Genomic_DNA"/>
</dbReference>
<dbReference type="RefSeq" id="WP_011380068.1">
    <property type="nucleotide sequence ID" value="NC_007614.1"/>
</dbReference>
<dbReference type="SMR" id="Q2YB53"/>
<dbReference type="STRING" id="323848.Nmul_A0711"/>
<dbReference type="KEGG" id="nmu:Nmul_A0711"/>
<dbReference type="eggNOG" id="COG1162">
    <property type="taxonomic scope" value="Bacteria"/>
</dbReference>
<dbReference type="HOGENOM" id="CLU_033617_2_0_4"/>
<dbReference type="OrthoDB" id="9809485at2"/>
<dbReference type="Proteomes" id="UP000002718">
    <property type="component" value="Chromosome"/>
</dbReference>
<dbReference type="GO" id="GO:0005737">
    <property type="term" value="C:cytoplasm"/>
    <property type="evidence" value="ECO:0007669"/>
    <property type="project" value="UniProtKB-SubCell"/>
</dbReference>
<dbReference type="GO" id="GO:0005525">
    <property type="term" value="F:GTP binding"/>
    <property type="evidence" value="ECO:0007669"/>
    <property type="project" value="UniProtKB-UniRule"/>
</dbReference>
<dbReference type="GO" id="GO:0003924">
    <property type="term" value="F:GTPase activity"/>
    <property type="evidence" value="ECO:0007669"/>
    <property type="project" value="UniProtKB-UniRule"/>
</dbReference>
<dbReference type="GO" id="GO:0046872">
    <property type="term" value="F:metal ion binding"/>
    <property type="evidence" value="ECO:0007669"/>
    <property type="project" value="UniProtKB-KW"/>
</dbReference>
<dbReference type="GO" id="GO:0019843">
    <property type="term" value="F:rRNA binding"/>
    <property type="evidence" value="ECO:0007669"/>
    <property type="project" value="UniProtKB-KW"/>
</dbReference>
<dbReference type="GO" id="GO:0042274">
    <property type="term" value="P:ribosomal small subunit biogenesis"/>
    <property type="evidence" value="ECO:0007669"/>
    <property type="project" value="UniProtKB-UniRule"/>
</dbReference>
<dbReference type="CDD" id="cd04466">
    <property type="entry name" value="S1_YloQ_GTPase"/>
    <property type="match status" value="1"/>
</dbReference>
<dbReference type="CDD" id="cd01854">
    <property type="entry name" value="YjeQ_EngC"/>
    <property type="match status" value="1"/>
</dbReference>
<dbReference type="Gene3D" id="2.40.50.140">
    <property type="entry name" value="Nucleic acid-binding proteins"/>
    <property type="match status" value="1"/>
</dbReference>
<dbReference type="Gene3D" id="3.40.50.300">
    <property type="entry name" value="P-loop containing nucleotide triphosphate hydrolases"/>
    <property type="match status" value="1"/>
</dbReference>
<dbReference type="Gene3D" id="1.10.40.50">
    <property type="entry name" value="Probable gtpase engc, domain 3"/>
    <property type="match status" value="1"/>
</dbReference>
<dbReference type="HAMAP" id="MF_01820">
    <property type="entry name" value="GTPase_RsgA"/>
    <property type="match status" value="1"/>
</dbReference>
<dbReference type="InterPro" id="IPR030378">
    <property type="entry name" value="G_CP_dom"/>
</dbReference>
<dbReference type="InterPro" id="IPR012340">
    <property type="entry name" value="NA-bd_OB-fold"/>
</dbReference>
<dbReference type="InterPro" id="IPR027417">
    <property type="entry name" value="P-loop_NTPase"/>
</dbReference>
<dbReference type="InterPro" id="IPR004881">
    <property type="entry name" value="Ribosome_biogen_GTPase_RsgA"/>
</dbReference>
<dbReference type="InterPro" id="IPR010914">
    <property type="entry name" value="RsgA_GTPase_dom"/>
</dbReference>
<dbReference type="InterPro" id="IPR031944">
    <property type="entry name" value="RsgA_N"/>
</dbReference>
<dbReference type="NCBIfam" id="TIGR00157">
    <property type="entry name" value="ribosome small subunit-dependent GTPase A"/>
    <property type="match status" value="1"/>
</dbReference>
<dbReference type="PANTHER" id="PTHR32120">
    <property type="entry name" value="SMALL RIBOSOMAL SUBUNIT BIOGENESIS GTPASE RSGA"/>
    <property type="match status" value="1"/>
</dbReference>
<dbReference type="PANTHER" id="PTHR32120:SF11">
    <property type="entry name" value="SMALL RIBOSOMAL SUBUNIT BIOGENESIS GTPASE RSGA 1, MITOCHONDRIAL-RELATED"/>
    <property type="match status" value="1"/>
</dbReference>
<dbReference type="Pfam" id="PF03193">
    <property type="entry name" value="RsgA_GTPase"/>
    <property type="match status" value="1"/>
</dbReference>
<dbReference type="SUPFAM" id="SSF50249">
    <property type="entry name" value="Nucleic acid-binding proteins"/>
    <property type="match status" value="1"/>
</dbReference>
<dbReference type="SUPFAM" id="SSF52540">
    <property type="entry name" value="P-loop containing nucleoside triphosphate hydrolases"/>
    <property type="match status" value="1"/>
</dbReference>
<dbReference type="PROSITE" id="PS50936">
    <property type="entry name" value="ENGC_GTPASE"/>
    <property type="match status" value="1"/>
</dbReference>
<dbReference type="PROSITE" id="PS51721">
    <property type="entry name" value="G_CP"/>
    <property type="match status" value="1"/>
</dbReference>
<protein>
    <recommendedName>
        <fullName evidence="1">Small ribosomal subunit biogenesis GTPase RsgA</fullName>
        <ecNumber evidence="1">3.6.1.-</ecNumber>
    </recommendedName>
</protein>
<keyword id="KW-0963">Cytoplasm</keyword>
<keyword id="KW-0342">GTP-binding</keyword>
<keyword id="KW-0378">Hydrolase</keyword>
<keyword id="KW-0479">Metal-binding</keyword>
<keyword id="KW-0547">Nucleotide-binding</keyword>
<keyword id="KW-1185">Reference proteome</keyword>
<keyword id="KW-0690">Ribosome biogenesis</keyword>
<keyword id="KW-0694">RNA-binding</keyword>
<keyword id="KW-0699">rRNA-binding</keyword>
<keyword id="KW-0862">Zinc</keyword>
<proteinExistence type="inferred from homology"/>
<gene>
    <name evidence="1" type="primary">rsgA</name>
    <name type="ordered locus">Nmul_A0711</name>
</gene>
<accession>Q2YB53</accession>
<sequence>MRSPGRPSVTSPPLRGEIVAAFGRHFLVKTADESTLTCVLRGKKSGAACGDWVEIYQTASEQGVIERILPRSALLYRSDLSREKLIAANATQVIIVVAPVPSFSEELINRCLVAAESQQLSVLIVLNKTDLLGPSKVALNGLSLYRELDYTLLPISARNDVKPLLPYLEDNLSVLVGQSGMGKSTIINALVPDAERATGDISPTLDAGRHTTTHARLYHLDRNARIIDSPGIQQFGLQHLSIEAIAWGFREFRPYIGKCKFNNCRHSGEPGCALANAMRESEVSVRRIDLYHKLIASLNTNRIPSSSSRTKIQ</sequence>
<feature type="chain" id="PRO_1000188110" description="Small ribosomal subunit biogenesis GTPase RsgA">
    <location>
        <begin position="1"/>
        <end position="313"/>
    </location>
</feature>
<feature type="domain" description="CP-type G" evidence="2">
    <location>
        <begin position="82"/>
        <end position="235"/>
    </location>
</feature>
<feature type="binding site" evidence="1">
    <location>
        <begin position="127"/>
        <end position="130"/>
    </location>
    <ligand>
        <name>GTP</name>
        <dbReference type="ChEBI" id="CHEBI:37565"/>
    </ligand>
</feature>
<feature type="binding site" evidence="1">
    <location>
        <begin position="177"/>
        <end position="185"/>
    </location>
    <ligand>
        <name>GTP</name>
        <dbReference type="ChEBI" id="CHEBI:37565"/>
    </ligand>
</feature>
<feature type="binding site" evidence="1">
    <location>
        <position position="259"/>
    </location>
    <ligand>
        <name>Zn(2+)</name>
        <dbReference type="ChEBI" id="CHEBI:29105"/>
    </ligand>
</feature>
<feature type="binding site" evidence="1">
    <location>
        <position position="264"/>
    </location>
    <ligand>
        <name>Zn(2+)</name>
        <dbReference type="ChEBI" id="CHEBI:29105"/>
    </ligand>
</feature>
<feature type="binding site" evidence="1">
    <location>
        <position position="266"/>
    </location>
    <ligand>
        <name>Zn(2+)</name>
        <dbReference type="ChEBI" id="CHEBI:29105"/>
    </ligand>
</feature>
<feature type="binding site" evidence="1">
    <location>
        <position position="272"/>
    </location>
    <ligand>
        <name>Zn(2+)</name>
        <dbReference type="ChEBI" id="CHEBI:29105"/>
    </ligand>
</feature>
<organism>
    <name type="scientific">Nitrosospira multiformis (strain ATCC 25196 / NCIMB 11849 / C 71)</name>
    <dbReference type="NCBI Taxonomy" id="323848"/>
    <lineage>
        <taxon>Bacteria</taxon>
        <taxon>Pseudomonadati</taxon>
        <taxon>Pseudomonadota</taxon>
        <taxon>Betaproteobacteria</taxon>
        <taxon>Nitrosomonadales</taxon>
        <taxon>Nitrosomonadaceae</taxon>
        <taxon>Nitrosospira</taxon>
    </lineage>
</organism>
<name>RSGA_NITMU</name>
<comment type="function">
    <text evidence="1">One of several proteins that assist in the late maturation steps of the functional core of the 30S ribosomal subunit. Helps release RbfA from mature subunits. May play a role in the assembly of ribosomal proteins into the subunit. Circularly permuted GTPase that catalyzes slow GTP hydrolysis, GTPase activity is stimulated by the 30S ribosomal subunit.</text>
</comment>
<comment type="cofactor">
    <cofactor evidence="1">
        <name>Zn(2+)</name>
        <dbReference type="ChEBI" id="CHEBI:29105"/>
    </cofactor>
    <text evidence="1">Binds 1 zinc ion per subunit.</text>
</comment>
<comment type="subunit">
    <text evidence="1">Monomer. Associates with 30S ribosomal subunit, binds 16S rRNA.</text>
</comment>
<comment type="subcellular location">
    <subcellularLocation>
        <location evidence="1">Cytoplasm</location>
    </subcellularLocation>
</comment>
<comment type="similarity">
    <text evidence="1">Belongs to the TRAFAC class YlqF/YawG GTPase family. RsgA subfamily.</text>
</comment>
<reference key="1">
    <citation type="submission" date="2005-08" db="EMBL/GenBank/DDBJ databases">
        <title>Complete sequence of chromosome 1 of Nitrosospira multiformis ATCC 25196.</title>
        <authorList>
            <person name="Copeland A."/>
            <person name="Lucas S."/>
            <person name="Lapidus A."/>
            <person name="Barry K."/>
            <person name="Detter J.C."/>
            <person name="Glavina T."/>
            <person name="Hammon N."/>
            <person name="Israni S."/>
            <person name="Pitluck S."/>
            <person name="Chain P."/>
            <person name="Malfatti S."/>
            <person name="Shin M."/>
            <person name="Vergez L."/>
            <person name="Schmutz J."/>
            <person name="Larimer F."/>
            <person name="Land M."/>
            <person name="Hauser L."/>
            <person name="Kyrpides N."/>
            <person name="Lykidis A."/>
            <person name="Richardson P."/>
        </authorList>
    </citation>
    <scope>NUCLEOTIDE SEQUENCE [LARGE SCALE GENOMIC DNA]</scope>
    <source>
        <strain>ATCC 25196 / NCIMB 11849 / C 71</strain>
    </source>
</reference>
<evidence type="ECO:0000255" key="1">
    <source>
        <dbReference type="HAMAP-Rule" id="MF_01820"/>
    </source>
</evidence>
<evidence type="ECO:0000255" key="2">
    <source>
        <dbReference type="PROSITE-ProRule" id="PRU01058"/>
    </source>
</evidence>